<organism>
    <name type="scientific">Coxiella burnetii (strain CbuK_Q154)</name>
    <name type="common">Coxiella burnetii (strain Q154)</name>
    <dbReference type="NCBI Taxonomy" id="434924"/>
    <lineage>
        <taxon>Bacteria</taxon>
        <taxon>Pseudomonadati</taxon>
        <taxon>Pseudomonadota</taxon>
        <taxon>Gammaproteobacteria</taxon>
        <taxon>Legionellales</taxon>
        <taxon>Coxiellaceae</taxon>
        <taxon>Coxiella</taxon>
    </lineage>
</organism>
<comment type="function">
    <text evidence="1">Hydrolyzes diadenosine 5',5'''-P1,P4-tetraphosphate to yield ADP.</text>
</comment>
<comment type="catalytic activity">
    <reaction evidence="1">
        <text>P(1),P(4)-bis(5'-adenosyl) tetraphosphate + H2O = 2 ADP + 2 H(+)</text>
        <dbReference type="Rhea" id="RHEA:24252"/>
        <dbReference type="ChEBI" id="CHEBI:15377"/>
        <dbReference type="ChEBI" id="CHEBI:15378"/>
        <dbReference type="ChEBI" id="CHEBI:58141"/>
        <dbReference type="ChEBI" id="CHEBI:456216"/>
        <dbReference type="EC" id="3.6.1.41"/>
    </reaction>
</comment>
<comment type="similarity">
    <text evidence="1">Belongs to the Ap4A hydrolase family.</text>
</comment>
<gene>
    <name evidence="1" type="primary">apaH</name>
    <name type="ordered locus">CbuK_2037</name>
</gene>
<protein>
    <recommendedName>
        <fullName evidence="1">Bis(5'-nucleosyl)-tetraphosphatase, symmetrical</fullName>
        <ecNumber evidence="1">3.6.1.41</ecNumber>
    </recommendedName>
    <alternativeName>
        <fullName evidence="1">Ap4A hydrolase</fullName>
    </alternativeName>
    <alternativeName>
        <fullName evidence="1">Diadenosine 5',5'''-P1,P4-tetraphosphate pyrophosphohydrolase</fullName>
    </alternativeName>
    <alternativeName>
        <fullName evidence="1">Diadenosine tetraphosphatase</fullName>
    </alternativeName>
</protein>
<dbReference type="EC" id="3.6.1.41" evidence="1"/>
<dbReference type="EMBL" id="CP001020">
    <property type="protein sequence ID" value="ACJ21137.1"/>
    <property type="molecule type" value="Genomic_DNA"/>
</dbReference>
<dbReference type="RefSeq" id="WP_005769711.1">
    <property type="nucleotide sequence ID" value="NC_011528.1"/>
</dbReference>
<dbReference type="SMR" id="B6J646"/>
<dbReference type="KEGG" id="cbc:CbuK_2037"/>
<dbReference type="HOGENOM" id="CLU_056184_2_0_6"/>
<dbReference type="GO" id="GO:0008803">
    <property type="term" value="F:bis(5'-nucleosyl)-tetraphosphatase (symmetrical) activity"/>
    <property type="evidence" value="ECO:0007669"/>
    <property type="project" value="UniProtKB-UniRule"/>
</dbReference>
<dbReference type="CDD" id="cd07422">
    <property type="entry name" value="MPP_ApaH"/>
    <property type="match status" value="1"/>
</dbReference>
<dbReference type="Gene3D" id="3.60.21.10">
    <property type="match status" value="1"/>
</dbReference>
<dbReference type="HAMAP" id="MF_00199">
    <property type="entry name" value="ApaH"/>
    <property type="match status" value="1"/>
</dbReference>
<dbReference type="InterPro" id="IPR004617">
    <property type="entry name" value="ApaH"/>
</dbReference>
<dbReference type="InterPro" id="IPR004843">
    <property type="entry name" value="Calcineurin-like_PHP_ApaH"/>
</dbReference>
<dbReference type="InterPro" id="IPR029052">
    <property type="entry name" value="Metallo-depent_PP-like"/>
</dbReference>
<dbReference type="NCBIfam" id="TIGR00668">
    <property type="entry name" value="apaH"/>
    <property type="match status" value="1"/>
</dbReference>
<dbReference type="NCBIfam" id="NF001204">
    <property type="entry name" value="PRK00166.1"/>
    <property type="match status" value="1"/>
</dbReference>
<dbReference type="PANTHER" id="PTHR40942">
    <property type="match status" value="1"/>
</dbReference>
<dbReference type="PANTHER" id="PTHR40942:SF4">
    <property type="entry name" value="CYTOCHROME C5"/>
    <property type="match status" value="1"/>
</dbReference>
<dbReference type="Pfam" id="PF00149">
    <property type="entry name" value="Metallophos"/>
    <property type="match status" value="1"/>
</dbReference>
<dbReference type="PIRSF" id="PIRSF000903">
    <property type="entry name" value="B5n-ttraPtase_sm"/>
    <property type="match status" value="1"/>
</dbReference>
<dbReference type="SUPFAM" id="SSF56300">
    <property type="entry name" value="Metallo-dependent phosphatases"/>
    <property type="match status" value="1"/>
</dbReference>
<sequence length="291" mass="33302">MDARAINSREKADLKYPRNTYIIGDVQGCYRELQELLELIQFDSTKDRLGFVGDLVNRGPNSLEVLRFLKSLSSPLIVLGNHDLYLLILGYGLMPEDSYEHTLHAVLQAPDKLELLEWLRHCPLIRYEKSLSAVLVHAGLPPQWNIKESILHAEEISTALKGPHYLAFLKNLFGNEPSQWKEDLEGQDRLRYICNAFTRMRFCDAKGHLDLESEGKTNQAPSRFRPWFEWRNPQEDNVDIVFGHWAALNGQSSAPHTHALDTGCAWGYKLTGINLKTKERFSVPCQSALRM</sequence>
<keyword id="KW-0378">Hydrolase</keyword>
<evidence type="ECO:0000255" key="1">
    <source>
        <dbReference type="HAMAP-Rule" id="MF_00199"/>
    </source>
</evidence>
<proteinExistence type="inferred from homology"/>
<accession>B6J646</accession>
<feature type="chain" id="PRO_1000099319" description="Bis(5'-nucleosyl)-tetraphosphatase, symmetrical">
    <location>
        <begin position="1"/>
        <end position="291"/>
    </location>
</feature>
<name>APAH_COXB1</name>
<reference key="1">
    <citation type="journal article" date="2009" name="Infect. Immun.">
        <title>Comparative genomics reveal extensive transposon-mediated genomic plasticity and diversity among potential effector proteins within the genus Coxiella.</title>
        <authorList>
            <person name="Beare P.A."/>
            <person name="Unsworth N."/>
            <person name="Andoh M."/>
            <person name="Voth D.E."/>
            <person name="Omsland A."/>
            <person name="Gilk S.D."/>
            <person name="Williams K.P."/>
            <person name="Sobral B.W."/>
            <person name="Kupko J.J. III"/>
            <person name="Porcella S.F."/>
            <person name="Samuel J.E."/>
            <person name="Heinzen R.A."/>
        </authorList>
    </citation>
    <scope>NUCLEOTIDE SEQUENCE [LARGE SCALE GENOMIC DNA]</scope>
    <source>
        <strain>CbuK_Q154</strain>
    </source>
</reference>